<feature type="chain" id="PRO_1000215365" description="UPF0325 protein NT01EI_0832">
    <location>
        <begin position="1"/>
        <end position="128"/>
    </location>
</feature>
<accession>C5BHB2</accession>
<sequence>MYDNLKSLGITQPEEIDRYSLRQEANNDILKIYFRKDKGEFFAKSVKFKYPRQRKTILSDNDSQGMREISEISPNLRYVIEELDRLCLRDRQEEDLKRKILDDLRHLESVVANKIAEIEADLEKLTGK</sequence>
<protein>
    <recommendedName>
        <fullName evidence="1">UPF0325 protein NT01EI_0832</fullName>
    </recommendedName>
</protein>
<organism>
    <name type="scientific">Edwardsiella ictaluri (strain 93-146)</name>
    <dbReference type="NCBI Taxonomy" id="634503"/>
    <lineage>
        <taxon>Bacteria</taxon>
        <taxon>Pseudomonadati</taxon>
        <taxon>Pseudomonadota</taxon>
        <taxon>Gammaproteobacteria</taxon>
        <taxon>Enterobacterales</taxon>
        <taxon>Hafniaceae</taxon>
        <taxon>Edwardsiella</taxon>
    </lineage>
</organism>
<dbReference type="EMBL" id="CP001600">
    <property type="protein sequence ID" value="ACR68048.1"/>
    <property type="molecule type" value="Genomic_DNA"/>
</dbReference>
<dbReference type="RefSeq" id="WP_015870241.1">
    <property type="nucleotide sequence ID" value="NZ_CP169062.1"/>
</dbReference>
<dbReference type="SMR" id="C5BHB2"/>
<dbReference type="STRING" id="67780.B6E78_14755"/>
<dbReference type="KEGG" id="eic:NT01EI_0832"/>
<dbReference type="PATRIC" id="fig|634503.3.peg.751"/>
<dbReference type="HOGENOM" id="CLU_136774_0_0_6"/>
<dbReference type="OrthoDB" id="5624524at2"/>
<dbReference type="Proteomes" id="UP000001485">
    <property type="component" value="Chromosome"/>
</dbReference>
<dbReference type="HAMAP" id="MF_01519">
    <property type="entry name" value="UPF0325"/>
    <property type="match status" value="1"/>
</dbReference>
<dbReference type="InterPro" id="IPR020911">
    <property type="entry name" value="UPF0325"/>
</dbReference>
<dbReference type="NCBIfam" id="NF010213">
    <property type="entry name" value="PRK13677.1"/>
    <property type="match status" value="1"/>
</dbReference>
<dbReference type="Pfam" id="PF11944">
    <property type="entry name" value="DUF3461"/>
    <property type="match status" value="1"/>
</dbReference>
<gene>
    <name type="ordered locus">NT01EI_0832</name>
</gene>
<evidence type="ECO:0000255" key="1">
    <source>
        <dbReference type="HAMAP-Rule" id="MF_01519"/>
    </source>
</evidence>
<name>Y832_EDWI9</name>
<reference key="1">
    <citation type="submission" date="2009-03" db="EMBL/GenBank/DDBJ databases">
        <title>Complete genome sequence of Edwardsiella ictaluri 93-146.</title>
        <authorList>
            <person name="Williams M.L."/>
            <person name="Gillaspy A.F."/>
            <person name="Dyer D.W."/>
            <person name="Thune R.L."/>
            <person name="Waldbieser G.C."/>
            <person name="Schuster S.C."/>
            <person name="Gipson J."/>
            <person name="Zaitshik J."/>
            <person name="Landry C."/>
            <person name="Lawrence M.L."/>
        </authorList>
    </citation>
    <scope>NUCLEOTIDE SEQUENCE [LARGE SCALE GENOMIC DNA]</scope>
    <source>
        <strain>93-146</strain>
    </source>
</reference>
<comment type="similarity">
    <text evidence="1">Belongs to the UPF0325 family.</text>
</comment>
<proteinExistence type="inferred from homology"/>